<gene>
    <name evidence="1" type="primary">queF</name>
    <name type="ordered locus">BB3340</name>
</gene>
<evidence type="ECO:0000255" key="1">
    <source>
        <dbReference type="HAMAP-Rule" id="MF_00817"/>
    </source>
</evidence>
<evidence type="ECO:0000305" key="2"/>
<reference key="1">
    <citation type="journal article" date="2003" name="Nat. Genet.">
        <title>Comparative analysis of the genome sequences of Bordetella pertussis, Bordetella parapertussis and Bordetella bronchiseptica.</title>
        <authorList>
            <person name="Parkhill J."/>
            <person name="Sebaihia M."/>
            <person name="Preston A."/>
            <person name="Murphy L.D."/>
            <person name="Thomson N.R."/>
            <person name="Harris D.E."/>
            <person name="Holden M.T.G."/>
            <person name="Churcher C.M."/>
            <person name="Bentley S.D."/>
            <person name="Mungall K.L."/>
            <person name="Cerdeno-Tarraga A.-M."/>
            <person name="Temple L."/>
            <person name="James K.D."/>
            <person name="Harris B."/>
            <person name="Quail M.A."/>
            <person name="Achtman M."/>
            <person name="Atkin R."/>
            <person name="Baker S."/>
            <person name="Basham D."/>
            <person name="Bason N."/>
            <person name="Cherevach I."/>
            <person name="Chillingworth T."/>
            <person name="Collins M."/>
            <person name="Cronin A."/>
            <person name="Davis P."/>
            <person name="Doggett J."/>
            <person name="Feltwell T."/>
            <person name="Goble A."/>
            <person name="Hamlin N."/>
            <person name="Hauser H."/>
            <person name="Holroyd S."/>
            <person name="Jagels K."/>
            <person name="Leather S."/>
            <person name="Moule S."/>
            <person name="Norberczak H."/>
            <person name="O'Neil S."/>
            <person name="Ormond D."/>
            <person name="Price C."/>
            <person name="Rabbinowitsch E."/>
            <person name="Rutter S."/>
            <person name="Sanders M."/>
            <person name="Saunders D."/>
            <person name="Seeger K."/>
            <person name="Sharp S."/>
            <person name="Simmonds M."/>
            <person name="Skelton J."/>
            <person name="Squares R."/>
            <person name="Squares S."/>
            <person name="Stevens K."/>
            <person name="Unwin L."/>
            <person name="Whitehead S."/>
            <person name="Barrell B.G."/>
            <person name="Maskell D.J."/>
        </authorList>
    </citation>
    <scope>NUCLEOTIDE SEQUENCE [LARGE SCALE GENOMIC DNA]</scope>
    <source>
        <strain>ATCC BAA-588 / NCTC 13252 / RB50</strain>
    </source>
</reference>
<name>QUEF_BORBR</name>
<protein>
    <recommendedName>
        <fullName evidence="1">NADPH-dependent 7-cyano-7-deazaguanine reductase</fullName>
        <ecNumber evidence="1">1.7.1.13</ecNumber>
    </recommendedName>
    <alternativeName>
        <fullName evidence="1">7-cyano-7-carbaguanine reductase</fullName>
    </alternativeName>
    <alternativeName>
        <fullName evidence="1">NADPH-dependent nitrile oxidoreductase</fullName>
    </alternativeName>
    <alternativeName>
        <fullName evidence="1">PreQ(0) reductase</fullName>
    </alternativeName>
</protein>
<feature type="chain" id="PRO_0000163020" description="NADPH-dependent 7-cyano-7-deazaguanine reductase">
    <location>
        <begin position="1"/>
        <end position="273"/>
    </location>
</feature>
<feature type="active site" description="Thioimide intermediate" evidence="1">
    <location>
        <position position="180"/>
    </location>
</feature>
<feature type="active site" description="Proton donor" evidence="1">
    <location>
        <position position="187"/>
    </location>
</feature>
<feature type="binding site" evidence="1">
    <location>
        <begin position="80"/>
        <end position="82"/>
    </location>
    <ligand>
        <name>substrate</name>
    </ligand>
</feature>
<feature type="binding site" evidence="1">
    <location>
        <begin position="82"/>
        <end position="83"/>
    </location>
    <ligand>
        <name>NADPH</name>
        <dbReference type="ChEBI" id="CHEBI:57783"/>
    </ligand>
</feature>
<feature type="binding site" evidence="1">
    <location>
        <begin position="219"/>
        <end position="220"/>
    </location>
    <ligand>
        <name>substrate</name>
    </ligand>
</feature>
<feature type="binding site" evidence="1">
    <location>
        <begin position="248"/>
        <end position="249"/>
    </location>
    <ligand>
        <name>NADPH</name>
        <dbReference type="ChEBI" id="CHEBI:57783"/>
    </ligand>
</feature>
<dbReference type="EC" id="1.7.1.13" evidence="1"/>
<dbReference type="EMBL" id="BX640447">
    <property type="protein sequence ID" value="CAE33832.1"/>
    <property type="status" value="ALT_INIT"/>
    <property type="molecule type" value="Genomic_DNA"/>
</dbReference>
<dbReference type="RefSeq" id="WP_010926793.1">
    <property type="nucleotide sequence ID" value="NC_002927.3"/>
</dbReference>
<dbReference type="SMR" id="Q7WH69"/>
<dbReference type="KEGG" id="bbr:BB3340"/>
<dbReference type="eggNOG" id="COG0780">
    <property type="taxonomic scope" value="Bacteria"/>
</dbReference>
<dbReference type="eggNOG" id="COG2904">
    <property type="taxonomic scope" value="Bacteria"/>
</dbReference>
<dbReference type="HOGENOM" id="CLU_054738_0_0_4"/>
<dbReference type="UniPathway" id="UPA00392"/>
<dbReference type="Proteomes" id="UP000001027">
    <property type="component" value="Chromosome"/>
</dbReference>
<dbReference type="GO" id="GO:0005737">
    <property type="term" value="C:cytoplasm"/>
    <property type="evidence" value="ECO:0007669"/>
    <property type="project" value="UniProtKB-SubCell"/>
</dbReference>
<dbReference type="GO" id="GO:0033739">
    <property type="term" value="F:preQ1 synthase activity"/>
    <property type="evidence" value="ECO:0007669"/>
    <property type="project" value="UniProtKB-UniRule"/>
</dbReference>
<dbReference type="GO" id="GO:0008616">
    <property type="term" value="P:queuosine biosynthetic process"/>
    <property type="evidence" value="ECO:0007669"/>
    <property type="project" value="UniProtKB-UniRule"/>
</dbReference>
<dbReference type="GO" id="GO:0006400">
    <property type="term" value="P:tRNA modification"/>
    <property type="evidence" value="ECO:0007669"/>
    <property type="project" value="UniProtKB-UniRule"/>
</dbReference>
<dbReference type="Gene3D" id="3.30.1130.10">
    <property type="match status" value="2"/>
</dbReference>
<dbReference type="HAMAP" id="MF_00817">
    <property type="entry name" value="QueF_type2"/>
    <property type="match status" value="1"/>
</dbReference>
<dbReference type="InterPro" id="IPR043133">
    <property type="entry name" value="GTP-CH-I_C/QueF"/>
</dbReference>
<dbReference type="InterPro" id="IPR050084">
    <property type="entry name" value="NADPH_dep_7-cyano-7-deazaG_red"/>
</dbReference>
<dbReference type="InterPro" id="IPR029500">
    <property type="entry name" value="QueF"/>
</dbReference>
<dbReference type="InterPro" id="IPR029139">
    <property type="entry name" value="QueF_N"/>
</dbReference>
<dbReference type="InterPro" id="IPR016428">
    <property type="entry name" value="QueF_type2"/>
</dbReference>
<dbReference type="NCBIfam" id="TIGR03138">
    <property type="entry name" value="QueF"/>
    <property type="match status" value="1"/>
</dbReference>
<dbReference type="PANTHER" id="PTHR34354">
    <property type="entry name" value="NADPH-DEPENDENT 7-CYANO-7-DEAZAGUANINE REDUCTASE"/>
    <property type="match status" value="1"/>
</dbReference>
<dbReference type="PANTHER" id="PTHR34354:SF1">
    <property type="entry name" value="NADPH-DEPENDENT 7-CYANO-7-DEAZAGUANINE REDUCTASE"/>
    <property type="match status" value="1"/>
</dbReference>
<dbReference type="Pfam" id="PF14489">
    <property type="entry name" value="QueF"/>
    <property type="match status" value="1"/>
</dbReference>
<dbReference type="Pfam" id="PF14819">
    <property type="entry name" value="QueF_N"/>
    <property type="match status" value="1"/>
</dbReference>
<dbReference type="PIRSF" id="PIRSF004750">
    <property type="entry name" value="Nitrile_oxidored_YqcD_prd"/>
    <property type="match status" value="1"/>
</dbReference>
<dbReference type="SUPFAM" id="SSF55620">
    <property type="entry name" value="Tetrahydrobiopterin biosynthesis enzymes-like"/>
    <property type="match status" value="1"/>
</dbReference>
<keyword id="KW-0963">Cytoplasm</keyword>
<keyword id="KW-0521">NADP</keyword>
<keyword id="KW-0560">Oxidoreductase</keyword>
<keyword id="KW-0671">Queuosine biosynthesis</keyword>
<accession>Q7WH69</accession>
<organism>
    <name type="scientific">Bordetella bronchiseptica (strain ATCC BAA-588 / NCTC 13252 / RB50)</name>
    <name type="common">Alcaligenes bronchisepticus</name>
    <dbReference type="NCBI Taxonomy" id="257310"/>
    <lineage>
        <taxon>Bacteria</taxon>
        <taxon>Pseudomonadati</taxon>
        <taxon>Pseudomonadota</taxon>
        <taxon>Betaproteobacteria</taxon>
        <taxon>Burkholderiales</taxon>
        <taxon>Alcaligenaceae</taxon>
        <taxon>Bordetella</taxon>
    </lineage>
</organism>
<comment type="function">
    <text evidence="1">Catalyzes the NADPH-dependent reduction of 7-cyano-7-deazaguanine (preQ0) to 7-aminomethyl-7-deazaguanine (preQ1).</text>
</comment>
<comment type="catalytic activity">
    <reaction evidence="1">
        <text>7-aminomethyl-7-carbaguanine + 2 NADP(+) = 7-cyano-7-deazaguanine + 2 NADPH + 3 H(+)</text>
        <dbReference type="Rhea" id="RHEA:13409"/>
        <dbReference type="ChEBI" id="CHEBI:15378"/>
        <dbReference type="ChEBI" id="CHEBI:45075"/>
        <dbReference type="ChEBI" id="CHEBI:57783"/>
        <dbReference type="ChEBI" id="CHEBI:58349"/>
        <dbReference type="ChEBI" id="CHEBI:58703"/>
        <dbReference type="EC" id="1.7.1.13"/>
    </reaction>
</comment>
<comment type="pathway">
    <text evidence="1">tRNA modification; tRNA-queuosine biosynthesis.</text>
</comment>
<comment type="subunit">
    <text evidence="1">Homodimer.</text>
</comment>
<comment type="subcellular location">
    <subcellularLocation>
        <location evidence="1">Cytoplasm</location>
    </subcellularLocation>
</comment>
<comment type="similarity">
    <text evidence="1">Belongs to the GTP cyclohydrolase I family. QueF type 2 subfamily.</text>
</comment>
<comment type="sequence caution" evidence="2">
    <conflict type="erroneous initiation">
        <sequence resource="EMBL-CDS" id="CAE33832"/>
    </conflict>
</comment>
<proteinExistence type="inferred from homology"/>
<sequence length="273" mass="30651">MSLSNAPLGQHVAYPSQYDPGLLFPIPRATNRASLQLGATLPFTGVDLWNAYELSWLDARGKPRVAMATFSFPADSPNIVESKSFKLYLNSFNQTRLPNAQALRDRLERDLAAAAGAPVGLEFISPQRFGELNMAELDGIYIDKLDIEIDTYEPAPQLLQCAPGDEVEETLATRLLKSNCPVTGQPDWASLQVRYRGRPIDRAALLKYVVSFRQHAEFHEHCVERIFGDIMRACQPRQLTVYARYTRRGGLDINPWRSNFESAPPADVRTARQ</sequence>